<feature type="signal peptide" description="Tat-type signal" evidence="1">
    <location>
        <begin position="1"/>
        <end position="31"/>
    </location>
</feature>
<feature type="chain" id="PRO_1000186353" description="Periplasmic nitrate reductase" evidence="1">
    <location>
        <begin position="32"/>
        <end position="828"/>
    </location>
</feature>
<feature type="domain" description="4Fe-4S Mo/W bis-MGD-type" evidence="1">
    <location>
        <begin position="39"/>
        <end position="95"/>
    </location>
</feature>
<feature type="binding site" evidence="1">
    <location>
        <position position="46"/>
    </location>
    <ligand>
        <name>[4Fe-4S] cluster</name>
        <dbReference type="ChEBI" id="CHEBI:49883"/>
    </ligand>
</feature>
<feature type="binding site" evidence="1">
    <location>
        <position position="49"/>
    </location>
    <ligand>
        <name>[4Fe-4S] cluster</name>
        <dbReference type="ChEBI" id="CHEBI:49883"/>
    </ligand>
</feature>
<feature type="binding site" evidence="1">
    <location>
        <position position="53"/>
    </location>
    <ligand>
        <name>[4Fe-4S] cluster</name>
        <dbReference type="ChEBI" id="CHEBI:49883"/>
    </ligand>
</feature>
<feature type="binding site" evidence="1">
    <location>
        <position position="81"/>
    </location>
    <ligand>
        <name>[4Fe-4S] cluster</name>
        <dbReference type="ChEBI" id="CHEBI:49883"/>
    </ligand>
</feature>
<feature type="binding site" evidence="1">
    <location>
        <position position="83"/>
    </location>
    <ligand>
        <name>Mo-bis(molybdopterin guanine dinucleotide)</name>
        <dbReference type="ChEBI" id="CHEBI:60539"/>
    </ligand>
</feature>
<feature type="binding site" evidence="1">
    <location>
        <position position="150"/>
    </location>
    <ligand>
        <name>Mo-bis(molybdopterin guanine dinucleotide)</name>
        <dbReference type="ChEBI" id="CHEBI:60539"/>
    </ligand>
</feature>
<feature type="binding site" evidence="1">
    <location>
        <position position="175"/>
    </location>
    <ligand>
        <name>Mo-bis(molybdopterin guanine dinucleotide)</name>
        <dbReference type="ChEBI" id="CHEBI:60539"/>
    </ligand>
</feature>
<feature type="binding site" evidence="1">
    <location>
        <position position="179"/>
    </location>
    <ligand>
        <name>Mo-bis(molybdopterin guanine dinucleotide)</name>
        <dbReference type="ChEBI" id="CHEBI:60539"/>
    </ligand>
</feature>
<feature type="binding site" evidence="1">
    <location>
        <begin position="212"/>
        <end position="219"/>
    </location>
    <ligand>
        <name>Mo-bis(molybdopterin guanine dinucleotide)</name>
        <dbReference type="ChEBI" id="CHEBI:60539"/>
    </ligand>
</feature>
<feature type="binding site" evidence="1">
    <location>
        <begin position="243"/>
        <end position="247"/>
    </location>
    <ligand>
        <name>Mo-bis(molybdopterin guanine dinucleotide)</name>
        <dbReference type="ChEBI" id="CHEBI:60539"/>
    </ligand>
</feature>
<feature type="binding site" evidence="1">
    <location>
        <begin position="262"/>
        <end position="264"/>
    </location>
    <ligand>
        <name>Mo-bis(molybdopterin guanine dinucleotide)</name>
        <dbReference type="ChEBI" id="CHEBI:60539"/>
    </ligand>
</feature>
<feature type="binding site" evidence="1">
    <location>
        <position position="372"/>
    </location>
    <ligand>
        <name>Mo-bis(molybdopterin guanine dinucleotide)</name>
        <dbReference type="ChEBI" id="CHEBI:60539"/>
    </ligand>
</feature>
<feature type="binding site" evidence="1">
    <location>
        <position position="376"/>
    </location>
    <ligand>
        <name>Mo-bis(molybdopterin guanine dinucleotide)</name>
        <dbReference type="ChEBI" id="CHEBI:60539"/>
    </ligand>
</feature>
<feature type="binding site" evidence="1">
    <location>
        <position position="482"/>
    </location>
    <ligand>
        <name>Mo-bis(molybdopterin guanine dinucleotide)</name>
        <dbReference type="ChEBI" id="CHEBI:60539"/>
    </ligand>
</feature>
<feature type="binding site" evidence="1">
    <location>
        <begin position="508"/>
        <end position="509"/>
    </location>
    <ligand>
        <name>Mo-bis(molybdopterin guanine dinucleotide)</name>
        <dbReference type="ChEBI" id="CHEBI:60539"/>
    </ligand>
</feature>
<feature type="binding site" evidence="1">
    <location>
        <position position="531"/>
    </location>
    <ligand>
        <name>Mo-bis(molybdopterin guanine dinucleotide)</name>
        <dbReference type="ChEBI" id="CHEBI:60539"/>
    </ligand>
</feature>
<feature type="binding site" evidence="1">
    <location>
        <position position="558"/>
    </location>
    <ligand>
        <name>Mo-bis(molybdopterin guanine dinucleotide)</name>
        <dbReference type="ChEBI" id="CHEBI:60539"/>
    </ligand>
</feature>
<feature type="binding site" evidence="1">
    <location>
        <begin position="718"/>
        <end position="727"/>
    </location>
    <ligand>
        <name>Mo-bis(molybdopterin guanine dinucleotide)</name>
        <dbReference type="ChEBI" id="CHEBI:60539"/>
    </ligand>
</feature>
<feature type="binding site" evidence="1">
    <location>
        <position position="794"/>
    </location>
    <ligand>
        <name>substrate</name>
    </ligand>
</feature>
<feature type="binding site" evidence="1">
    <location>
        <position position="802"/>
    </location>
    <ligand>
        <name>Mo-bis(molybdopterin guanine dinucleotide)</name>
        <dbReference type="ChEBI" id="CHEBI:60539"/>
    </ligand>
</feature>
<feature type="binding site" evidence="1">
    <location>
        <position position="819"/>
    </location>
    <ligand>
        <name>Mo-bis(molybdopterin guanine dinucleotide)</name>
        <dbReference type="ChEBI" id="CHEBI:60539"/>
    </ligand>
</feature>
<keyword id="KW-0004">4Fe-4S</keyword>
<keyword id="KW-0249">Electron transport</keyword>
<keyword id="KW-0408">Iron</keyword>
<keyword id="KW-0411">Iron-sulfur</keyword>
<keyword id="KW-0479">Metal-binding</keyword>
<keyword id="KW-0500">Molybdenum</keyword>
<keyword id="KW-0534">Nitrate assimilation</keyword>
<keyword id="KW-0560">Oxidoreductase</keyword>
<keyword id="KW-0574">Periplasm</keyword>
<keyword id="KW-1185">Reference proteome</keyword>
<keyword id="KW-0732">Signal</keyword>
<keyword id="KW-0813">Transport</keyword>
<sequence length="828" mass="93067">MKLSRRSFMKANAVAAAAAAAGLSVPGVARAVVGQQEAIKWDKAPCRFCGTGCGVLVGTQQGRVVACQGDPDAPVNRGLNCIKGYFLPKIMYGKDRLTQPLLRMKNGKYDKEGEFTPITWDQAFDVMEEKFKTALKEKGPESIGMFGSGQWTIWEGYAASKLFKAGFRSNNIDPNARHCMASAVVGFMRTFGMDEPMGCYDDIEQADAFVLWGSNMAEMHPILWSRITNRRLSNQNVTVAVLSTYQHRSFELADNGIIFTPQSDLVILNYIANYIIQNNAINQDFFSKHVNLRKGATDIGYGLRPTHPLEKAAKNPGSDASEPMSFEDYKAFVAEYTLEKTAEMTGVPKDQLEQLAQLYADPNKKVISYWTMGFNQHTRGVWANNLVYNLHLLTGKISQPGCGPFSLTGQPSACGTAREVGTFAHRLPADMVVTNEKHRDICEKKWNIPSGTIPAKIGLHAVAQDRALKDGKLNVYWTMCTNNMQAGPNINEERMPGWRDPRNFIIVSDPYPTVSALAADLILPTAMWVEKEGAYGNAERRTQFWRQQVQAPGEAKSDLWQLVQFSRRFKTEEVWPEELLAKKPELRGKTLYEVLYATPEVSKFPLSELAEDQLNDESHELGFYLQKGLFEEYAWFGRGHGHDLAPFDDYHKARGLRWPVVNGKETQWRYSEGNDPYVKAGEGYKFYGKPDGKAVIFALPFEPAAEAPDEEYDLWLSTGRVLEHWHTGSMTRRVPELHRAFPEAVLFIHPLDAKARDLRRGDKVKVVSRRGEVISIVETRGRNRPPQGLVYMPFFDAAQLVNKLTLDATDPLSKETDFKKCAVKLEKV</sequence>
<organism>
    <name type="scientific">Escherichia coli O127:H6 (strain E2348/69 / EPEC)</name>
    <dbReference type="NCBI Taxonomy" id="574521"/>
    <lineage>
        <taxon>Bacteria</taxon>
        <taxon>Pseudomonadati</taxon>
        <taxon>Pseudomonadota</taxon>
        <taxon>Gammaproteobacteria</taxon>
        <taxon>Enterobacterales</taxon>
        <taxon>Enterobacteriaceae</taxon>
        <taxon>Escherichia</taxon>
    </lineage>
</organism>
<proteinExistence type="inferred from homology"/>
<gene>
    <name evidence="1" type="primary">napA</name>
    <name type="ordered locus">E2348C_2350</name>
</gene>
<reference key="1">
    <citation type="journal article" date="2009" name="J. Bacteriol.">
        <title>Complete genome sequence and comparative genome analysis of enteropathogenic Escherichia coli O127:H6 strain E2348/69.</title>
        <authorList>
            <person name="Iguchi A."/>
            <person name="Thomson N.R."/>
            <person name="Ogura Y."/>
            <person name="Saunders D."/>
            <person name="Ooka T."/>
            <person name="Henderson I.R."/>
            <person name="Harris D."/>
            <person name="Asadulghani M."/>
            <person name="Kurokawa K."/>
            <person name="Dean P."/>
            <person name="Kenny B."/>
            <person name="Quail M.A."/>
            <person name="Thurston S."/>
            <person name="Dougan G."/>
            <person name="Hayashi T."/>
            <person name="Parkhill J."/>
            <person name="Frankel G."/>
        </authorList>
    </citation>
    <scope>NUCLEOTIDE SEQUENCE [LARGE SCALE GENOMIC DNA]</scope>
    <source>
        <strain>E2348/69 / EPEC</strain>
    </source>
</reference>
<name>NAPA_ECO27</name>
<dbReference type="EC" id="1.9.6.1" evidence="1"/>
<dbReference type="EMBL" id="FM180568">
    <property type="protein sequence ID" value="CAS09898.1"/>
    <property type="molecule type" value="Genomic_DNA"/>
</dbReference>
<dbReference type="RefSeq" id="WP_000778074.1">
    <property type="nucleotide sequence ID" value="NC_011601.1"/>
</dbReference>
<dbReference type="SMR" id="B7UFL9"/>
<dbReference type="KEGG" id="ecg:E2348C_2350"/>
<dbReference type="HOGENOM" id="CLU_000422_13_4_6"/>
<dbReference type="Proteomes" id="UP000008205">
    <property type="component" value="Chromosome"/>
</dbReference>
<dbReference type="GO" id="GO:0016020">
    <property type="term" value="C:membrane"/>
    <property type="evidence" value="ECO:0007669"/>
    <property type="project" value="TreeGrafter"/>
</dbReference>
<dbReference type="GO" id="GO:0009325">
    <property type="term" value="C:nitrate reductase complex"/>
    <property type="evidence" value="ECO:0007669"/>
    <property type="project" value="TreeGrafter"/>
</dbReference>
<dbReference type="GO" id="GO:0042597">
    <property type="term" value="C:periplasmic space"/>
    <property type="evidence" value="ECO:0007669"/>
    <property type="project" value="UniProtKB-SubCell"/>
</dbReference>
<dbReference type="GO" id="GO:0051539">
    <property type="term" value="F:4 iron, 4 sulfur cluster binding"/>
    <property type="evidence" value="ECO:0007669"/>
    <property type="project" value="UniProtKB-KW"/>
</dbReference>
<dbReference type="GO" id="GO:0009055">
    <property type="term" value="F:electron transfer activity"/>
    <property type="evidence" value="ECO:0007669"/>
    <property type="project" value="UniProtKB-UniRule"/>
</dbReference>
<dbReference type="GO" id="GO:0005506">
    <property type="term" value="F:iron ion binding"/>
    <property type="evidence" value="ECO:0007669"/>
    <property type="project" value="UniProtKB-UniRule"/>
</dbReference>
<dbReference type="GO" id="GO:0030151">
    <property type="term" value="F:molybdenum ion binding"/>
    <property type="evidence" value="ECO:0007669"/>
    <property type="project" value="InterPro"/>
</dbReference>
<dbReference type="GO" id="GO:0043546">
    <property type="term" value="F:molybdopterin cofactor binding"/>
    <property type="evidence" value="ECO:0007669"/>
    <property type="project" value="InterPro"/>
</dbReference>
<dbReference type="GO" id="GO:0050140">
    <property type="term" value="F:nitrate reductase (cytochrome) activity"/>
    <property type="evidence" value="ECO:0007669"/>
    <property type="project" value="UniProtKB-EC"/>
</dbReference>
<dbReference type="GO" id="GO:0045333">
    <property type="term" value="P:cellular respiration"/>
    <property type="evidence" value="ECO:0007669"/>
    <property type="project" value="UniProtKB-ARBA"/>
</dbReference>
<dbReference type="GO" id="GO:0006777">
    <property type="term" value="P:Mo-molybdopterin cofactor biosynthetic process"/>
    <property type="evidence" value="ECO:0007669"/>
    <property type="project" value="UniProtKB-UniRule"/>
</dbReference>
<dbReference type="GO" id="GO:0042128">
    <property type="term" value="P:nitrate assimilation"/>
    <property type="evidence" value="ECO:0007669"/>
    <property type="project" value="UniProtKB-UniRule"/>
</dbReference>
<dbReference type="CDD" id="cd02791">
    <property type="entry name" value="MopB_CT_Nitrate-R-NapA-like"/>
    <property type="match status" value="1"/>
</dbReference>
<dbReference type="CDD" id="cd02754">
    <property type="entry name" value="MopB_Nitrate-R-NapA-like"/>
    <property type="match status" value="1"/>
</dbReference>
<dbReference type="FunFam" id="2.40.40.20:FF:000005">
    <property type="entry name" value="Periplasmic nitrate reductase"/>
    <property type="match status" value="1"/>
</dbReference>
<dbReference type="FunFam" id="3.40.228.10:FF:000001">
    <property type="entry name" value="Periplasmic nitrate reductase"/>
    <property type="match status" value="1"/>
</dbReference>
<dbReference type="Gene3D" id="2.40.40.20">
    <property type="match status" value="1"/>
</dbReference>
<dbReference type="Gene3D" id="3.30.200.210">
    <property type="match status" value="1"/>
</dbReference>
<dbReference type="Gene3D" id="3.40.50.740">
    <property type="match status" value="1"/>
</dbReference>
<dbReference type="Gene3D" id="3.40.228.10">
    <property type="entry name" value="Dimethylsulfoxide Reductase, domain 2"/>
    <property type="match status" value="1"/>
</dbReference>
<dbReference type="HAMAP" id="MF_01630">
    <property type="entry name" value="Nitrate_reduct_NapA"/>
    <property type="match status" value="1"/>
</dbReference>
<dbReference type="InterPro" id="IPR009010">
    <property type="entry name" value="Asp_de-COase-like_dom_sf"/>
</dbReference>
<dbReference type="InterPro" id="IPR041957">
    <property type="entry name" value="CT_Nitrate-R-NapA-like"/>
</dbReference>
<dbReference type="InterPro" id="IPR006657">
    <property type="entry name" value="MoPterin_dinucl-bd_dom"/>
</dbReference>
<dbReference type="InterPro" id="IPR006656">
    <property type="entry name" value="Mopterin_OxRdtase"/>
</dbReference>
<dbReference type="InterPro" id="IPR006963">
    <property type="entry name" value="Mopterin_OxRdtase_4Fe-4S_dom"/>
</dbReference>
<dbReference type="InterPro" id="IPR027467">
    <property type="entry name" value="MopterinOxRdtase_cofactor_BS"/>
</dbReference>
<dbReference type="InterPro" id="IPR010051">
    <property type="entry name" value="Periplasm_NO3_reductase_lsu"/>
</dbReference>
<dbReference type="InterPro" id="IPR050123">
    <property type="entry name" value="Prok_molybdopt-oxidoreductase"/>
</dbReference>
<dbReference type="InterPro" id="IPR006311">
    <property type="entry name" value="TAT_signal"/>
</dbReference>
<dbReference type="InterPro" id="IPR019546">
    <property type="entry name" value="TAT_signal_bac_arc"/>
</dbReference>
<dbReference type="NCBIfam" id="TIGR01706">
    <property type="entry name" value="NAPA"/>
    <property type="match status" value="1"/>
</dbReference>
<dbReference type="NCBIfam" id="NF010055">
    <property type="entry name" value="PRK13532.1"/>
    <property type="match status" value="1"/>
</dbReference>
<dbReference type="NCBIfam" id="TIGR01409">
    <property type="entry name" value="TAT_signal_seq"/>
    <property type="match status" value="1"/>
</dbReference>
<dbReference type="PANTHER" id="PTHR43105:SF11">
    <property type="entry name" value="PERIPLASMIC NITRATE REDUCTASE"/>
    <property type="match status" value="1"/>
</dbReference>
<dbReference type="PANTHER" id="PTHR43105">
    <property type="entry name" value="RESPIRATORY NITRATE REDUCTASE"/>
    <property type="match status" value="1"/>
</dbReference>
<dbReference type="Pfam" id="PF04879">
    <property type="entry name" value="Molybdop_Fe4S4"/>
    <property type="match status" value="1"/>
</dbReference>
<dbReference type="Pfam" id="PF00384">
    <property type="entry name" value="Molybdopterin"/>
    <property type="match status" value="1"/>
</dbReference>
<dbReference type="Pfam" id="PF01568">
    <property type="entry name" value="Molydop_binding"/>
    <property type="match status" value="1"/>
</dbReference>
<dbReference type="SMART" id="SM00926">
    <property type="entry name" value="Molybdop_Fe4S4"/>
    <property type="match status" value="1"/>
</dbReference>
<dbReference type="SUPFAM" id="SSF50692">
    <property type="entry name" value="ADC-like"/>
    <property type="match status" value="1"/>
</dbReference>
<dbReference type="SUPFAM" id="SSF53706">
    <property type="entry name" value="Formate dehydrogenase/DMSO reductase, domains 1-3"/>
    <property type="match status" value="1"/>
</dbReference>
<dbReference type="PROSITE" id="PS51669">
    <property type="entry name" value="4FE4S_MOW_BIS_MGD"/>
    <property type="match status" value="1"/>
</dbReference>
<dbReference type="PROSITE" id="PS00551">
    <property type="entry name" value="MOLYBDOPTERIN_PROK_1"/>
    <property type="match status" value="1"/>
</dbReference>
<dbReference type="PROSITE" id="PS51318">
    <property type="entry name" value="TAT"/>
    <property type="match status" value="1"/>
</dbReference>
<protein>
    <recommendedName>
        <fullName evidence="1">Periplasmic nitrate reductase</fullName>
        <ecNumber evidence="1">1.9.6.1</ecNumber>
    </recommendedName>
</protein>
<evidence type="ECO:0000255" key="1">
    <source>
        <dbReference type="HAMAP-Rule" id="MF_01630"/>
    </source>
</evidence>
<accession>B7UFL9</accession>
<comment type="function">
    <text evidence="1">Catalytic subunit of the periplasmic nitrate reductase complex NapAB. Receives electrons from NapB and catalyzes the reduction of nitrate to nitrite.</text>
</comment>
<comment type="catalytic activity">
    <reaction evidence="1">
        <text>2 Fe(II)-[cytochrome] + nitrate + 2 H(+) = 2 Fe(III)-[cytochrome] + nitrite + H2O</text>
        <dbReference type="Rhea" id="RHEA:12909"/>
        <dbReference type="Rhea" id="RHEA-COMP:11777"/>
        <dbReference type="Rhea" id="RHEA-COMP:11778"/>
        <dbReference type="ChEBI" id="CHEBI:15377"/>
        <dbReference type="ChEBI" id="CHEBI:15378"/>
        <dbReference type="ChEBI" id="CHEBI:16301"/>
        <dbReference type="ChEBI" id="CHEBI:17632"/>
        <dbReference type="ChEBI" id="CHEBI:29033"/>
        <dbReference type="ChEBI" id="CHEBI:29034"/>
        <dbReference type="EC" id="1.9.6.1"/>
    </reaction>
</comment>
<comment type="cofactor">
    <cofactor evidence="1">
        <name>[4Fe-4S] cluster</name>
        <dbReference type="ChEBI" id="CHEBI:49883"/>
    </cofactor>
    <text evidence="1">Binds 1 [4Fe-4S] cluster.</text>
</comment>
<comment type="cofactor">
    <cofactor evidence="1">
        <name>Mo-bis(molybdopterin guanine dinucleotide)</name>
        <dbReference type="ChEBI" id="CHEBI:60539"/>
    </cofactor>
    <text evidence="1">Binds 1 molybdenum-bis(molybdopterin guanine dinucleotide) (Mo-bis-MGD) cofactor per subunit.</text>
</comment>
<comment type="subunit">
    <text evidence="1">Component of the periplasmic nitrate reductase NapAB complex composed of NapA and NapB.</text>
</comment>
<comment type="subcellular location">
    <subcellularLocation>
        <location evidence="1">Periplasm</location>
    </subcellularLocation>
</comment>
<comment type="PTM">
    <text evidence="1">Predicted to be exported by the Tat system. The position of the signal peptide cleavage has not been experimentally proven.</text>
</comment>
<comment type="similarity">
    <text evidence="1">Belongs to the prokaryotic molybdopterin-containing oxidoreductase family. NasA/NapA/NarB subfamily.</text>
</comment>